<evidence type="ECO:0000250" key="1">
    <source>
        <dbReference type="UniProtKB" id="A0A1L8GXY6"/>
    </source>
</evidence>
<evidence type="ECO:0000250" key="2">
    <source>
        <dbReference type="UniProtKB" id="Q3LUD3"/>
    </source>
</evidence>
<evidence type="ECO:0000255" key="3"/>
<evidence type="ECO:0000256" key="4">
    <source>
        <dbReference type="SAM" id="MobiDB-lite"/>
    </source>
</evidence>
<evidence type="ECO:0000269" key="5">
    <source>
    </source>
</evidence>
<evidence type="ECO:0000269" key="6">
    <source>
    </source>
</evidence>
<evidence type="ECO:0000269" key="7">
    <source>
    </source>
</evidence>
<evidence type="ECO:0000305" key="8"/>
<evidence type="ECO:0007744" key="9">
    <source>
    </source>
</evidence>
<evidence type="ECO:0007744" key="10">
    <source>
    </source>
</evidence>
<protein>
    <recommendedName>
        <fullName>NEDD4-binding protein 3</fullName>
        <shortName>N4BP3</shortName>
    </recommendedName>
</protein>
<proteinExistence type="evidence at protein level"/>
<sequence>MATAPGPAGIAMGSVGSLLERQDFSPEELRAALAGSRGSRQPDGLLRKGLGQREFLSYLHLPKKDSKSTKNTKRAPRNEPADYATLYYREHSRAGDFSKTSLPERGRFDKCRIRPSVFKPTAGNGKGFLSMQSLASHKGQKLWRSNGSLHTLACHPPLSPGPRASQARAQLLHALSLDEGGPEPEPSLSDSSSGGSFGRSPGTGPSPFSSSLGHLNHLGGSLDRASQGPKEAGPPAVLSCLPEPPPPYEFSCSSAEEMGAVLPETCEELKRGLGDEDGSNPFTQVLEERQRLWLAELKRLYVERLHEVTQKAERSERNLQLQLFMAQQEQRRLRKELRAQQGLAPEPRAPGTLPEADPSARPEEEARWEVCQKTAEISLLKQQLREAQAELAQKLAEIFSLKTQLRGSRAQAQAQDAELVRLREAVRSLQEQAPREEAPGSCETDDCKSRGLLGEAGGSEARDSAEQLRAELLQERLRGQEQALRFEQERRTWQEEKERVLRYQREIQGGYMDMYRRNQALEQELRALREPPTPWSPRLESSKI</sequence>
<comment type="function">
    <text evidence="1 7">Plays a positive role in the antiviral innate immune signaling pathway. Mechanistically, interacts with MAVS and functions as a positive regulator to promote 'Lys-63'-linked polyubiquitination of MAVS and thus strengthens the interaction between MAVS and TRAF2 (PubMed:34880843). Also plays a role in axon and dendrite arborization during cranial nerve development. May also be important for neural crest migration and early development of other anterior structures including eye, brain and cranial cartilage (By similarity).</text>
</comment>
<comment type="subunit">
    <text evidence="5 6 7">Binds NEDD4 (PubMed:11717310). Interacts with 14-3-3 proteins (PubMed:15324660). Interacts with MAVS (PubMed:34880843).</text>
</comment>
<comment type="interaction">
    <interactant intactId="EBI-2512055">
        <id>O15049</id>
    </interactant>
    <interactant intactId="EBI-10749669">
        <id>Q8IYE0</id>
        <label>CCDC146</label>
    </interactant>
    <organismsDiffer>false</organismsDiffer>
    <experiments>5</experiments>
</comment>
<comment type="interaction">
    <interactant intactId="EBI-2512055">
        <id>O15049</id>
    </interactant>
    <interactant intactId="EBI-12165781">
        <id>Q96LX7-5</id>
        <label>CCDC17</label>
    </interactant>
    <organismsDiffer>false</organismsDiffer>
    <experiments>3</experiments>
</comment>
<comment type="interaction">
    <interactant intactId="EBI-2512055">
        <id>O15049</id>
    </interactant>
    <interactant intactId="EBI-10253274">
        <id>Q6P9H4</id>
        <label>CNKSR3</label>
    </interactant>
    <organismsDiffer>false</organismsDiffer>
    <experiments>3</experiments>
</comment>
<comment type="interaction">
    <interactant intactId="EBI-2512055">
        <id>O15049</id>
    </interactant>
    <interactant intactId="EBI-2802973">
        <id>O14595</id>
        <label>CTDSP2</label>
    </interactant>
    <organismsDiffer>false</organismsDiffer>
    <experiments>3</experiments>
</comment>
<comment type="interaction">
    <interactant intactId="EBI-2512055">
        <id>O15049</id>
    </interactant>
    <interactant intactId="EBI-744099">
        <id>Q9H0I2</id>
        <label>ENKD1</label>
    </interactant>
    <organismsDiffer>false</organismsDiffer>
    <experiments>3</experiments>
</comment>
<comment type="interaction">
    <interactant intactId="EBI-2512055">
        <id>O15049</id>
    </interactant>
    <interactant intactId="EBI-2798728">
        <id>P61968</id>
        <label>LMO4</label>
    </interactant>
    <organismsDiffer>false</organismsDiffer>
    <experiments>3</experiments>
</comment>
<comment type="interaction">
    <interactant intactId="EBI-2512055">
        <id>O15049</id>
    </interactant>
    <interactant intactId="EBI-741158">
        <id>Q96HA8</id>
        <label>NTAQ1</label>
    </interactant>
    <organismsDiffer>false</organismsDiffer>
    <experiments>3</experiments>
</comment>
<comment type="interaction">
    <interactant intactId="EBI-2512055">
        <id>O15049</id>
    </interactant>
    <interactant intactId="EBI-11986293">
        <id>P0CG20</id>
        <label>PRR35</label>
    </interactant>
    <organismsDiffer>false</organismsDiffer>
    <experiments>3</experiments>
</comment>
<comment type="interaction">
    <interactant intactId="EBI-2512055">
        <id>O15049</id>
    </interactant>
    <interactant intactId="EBI-712376">
        <id>P40937</id>
        <label>RFC5</label>
    </interactant>
    <organismsDiffer>false</organismsDiffer>
    <experiments>5</experiments>
</comment>
<comment type="interaction">
    <interactant intactId="EBI-2512055">
        <id>O15049</id>
    </interactant>
    <interactant intactId="EBI-2130266">
        <id>Q9H4P4</id>
        <label>RNF41</label>
    </interactant>
    <organismsDiffer>false</organismsDiffer>
    <experiments>6</experiments>
</comment>
<comment type="interaction">
    <interactant intactId="EBI-2512055">
        <id>O15049</id>
    </interactant>
    <interactant intactId="EBI-6257312">
        <id>Q9BVN2</id>
        <label>RUSC1</label>
    </interactant>
    <organismsDiffer>false</organismsDiffer>
    <experiments>3</experiments>
</comment>
<comment type="interaction">
    <interactant intactId="EBI-2512055">
        <id>O15049</id>
    </interactant>
    <interactant intactId="EBI-727004">
        <id>O00560</id>
        <label>SDCBP</label>
    </interactant>
    <organismsDiffer>false</organismsDiffer>
    <experiments>3</experiments>
</comment>
<comment type="interaction">
    <interactant intactId="EBI-2512055">
        <id>O15049</id>
    </interactant>
    <interactant intactId="EBI-742688">
        <id>Q9NZD8</id>
        <label>SPG21</label>
    </interactant>
    <organismsDiffer>false</organismsDiffer>
    <experiments>3</experiments>
</comment>
<comment type="interaction">
    <interactant intactId="EBI-2512055">
        <id>O15049</id>
    </interactant>
    <interactant intactId="EBI-7353612">
        <id>P57075-2</id>
        <label>UBASH3A</label>
    </interactant>
    <organismsDiffer>false</organismsDiffer>
    <experiments>3</experiments>
</comment>
<comment type="subcellular location">
    <subcellularLocation>
        <location evidence="5">Cytoplasmic vesicle</location>
    </subcellularLocation>
    <subcellularLocation>
        <location evidence="2">Cell projection</location>
        <location evidence="2">Axon</location>
    </subcellularLocation>
    <subcellularLocation>
        <location evidence="2">Cell projection</location>
        <location evidence="2">Dendrite</location>
    </subcellularLocation>
    <text evidence="2">In developing neurons, accumulates in early growth cones and at branching points of axons and dendrites.</text>
</comment>
<comment type="similarity">
    <text evidence="8">Belongs to the N4BP3 family.</text>
</comment>
<comment type="sequence caution" evidence="8">
    <conflict type="erroneous initiation">
        <sequence resource="EMBL-CDS" id="BAA20799"/>
    </conflict>
    <text>Extended N-terminus.</text>
</comment>
<comment type="sequence caution" evidence="8">
    <conflict type="erroneous initiation">
        <sequence resource="EMBL-CDS" id="BAC86891"/>
    </conflict>
    <text>Truncated N-terminus.</text>
</comment>
<comment type="sequence caution" evidence="8">
    <conflict type="miscellaneous discrepancy">
        <sequence resource="EMBL-CDS" id="BAC86891"/>
    </conflict>
    <text>Intron retention.</text>
</comment>
<comment type="sequence caution" evidence="8">
    <conflict type="erroneous initiation">
        <sequence resource="EMBL-CDS" id="BAG58525"/>
    </conflict>
    <text>Truncated N-terminus.</text>
</comment>
<organism>
    <name type="scientific">Homo sapiens</name>
    <name type="common">Human</name>
    <dbReference type="NCBI Taxonomy" id="9606"/>
    <lineage>
        <taxon>Eukaryota</taxon>
        <taxon>Metazoa</taxon>
        <taxon>Chordata</taxon>
        <taxon>Craniata</taxon>
        <taxon>Vertebrata</taxon>
        <taxon>Euteleostomi</taxon>
        <taxon>Mammalia</taxon>
        <taxon>Eutheria</taxon>
        <taxon>Euarchontoglires</taxon>
        <taxon>Primates</taxon>
        <taxon>Haplorrhini</taxon>
        <taxon>Catarrhini</taxon>
        <taxon>Hominidae</taxon>
        <taxon>Homo</taxon>
    </lineage>
</organism>
<reference key="1">
    <citation type="journal article" date="1997" name="DNA Res.">
        <title>Prediction of the coding sequences of unidentified human genes. VII. The complete sequences of 100 new cDNA clones from brain which can code for large proteins in vitro.</title>
        <authorList>
            <person name="Nagase T."/>
            <person name="Ishikawa K."/>
            <person name="Nakajima D."/>
            <person name="Ohira M."/>
            <person name="Seki N."/>
            <person name="Miyajima N."/>
            <person name="Tanaka A."/>
            <person name="Kotani H."/>
            <person name="Nomura N."/>
            <person name="Ohara O."/>
        </authorList>
    </citation>
    <scope>NUCLEOTIDE SEQUENCE [LARGE SCALE MRNA]</scope>
    <source>
        <tissue>Brain</tissue>
    </source>
</reference>
<reference key="2">
    <citation type="submission" date="2005-09" db="EMBL/GenBank/DDBJ databases">
        <authorList>
            <person name="Mural R.J."/>
            <person name="Istrail S."/>
            <person name="Sutton G.G."/>
            <person name="Florea L."/>
            <person name="Halpern A.L."/>
            <person name="Mobarry C.M."/>
            <person name="Lippert R."/>
            <person name="Walenz B."/>
            <person name="Shatkay H."/>
            <person name="Dew I."/>
            <person name="Miller J.R."/>
            <person name="Flanigan M.J."/>
            <person name="Edwards N.J."/>
            <person name="Bolanos R."/>
            <person name="Fasulo D."/>
            <person name="Halldorsson B.V."/>
            <person name="Hannenhalli S."/>
            <person name="Turner R."/>
            <person name="Yooseph S."/>
            <person name="Lu F."/>
            <person name="Nusskern D.R."/>
            <person name="Shue B.C."/>
            <person name="Zheng X.H."/>
            <person name="Zhong F."/>
            <person name="Delcher A.L."/>
            <person name="Huson D.H."/>
            <person name="Kravitz S.A."/>
            <person name="Mouchard L."/>
            <person name="Reinert K."/>
            <person name="Remington K.A."/>
            <person name="Clark A.G."/>
            <person name="Waterman M.S."/>
            <person name="Eichler E.E."/>
            <person name="Adams M.D."/>
            <person name="Hunkapiller M.W."/>
            <person name="Myers E.W."/>
            <person name="Venter J.C."/>
        </authorList>
    </citation>
    <scope>NUCLEOTIDE SEQUENCE [LARGE SCALE GENOMIC DNA]</scope>
</reference>
<reference key="3">
    <citation type="journal article" date="2004" name="Genome Res.">
        <title>The status, quality, and expansion of the NIH full-length cDNA project: the Mammalian Gene Collection (MGC).</title>
        <authorList>
            <consortium name="The MGC Project Team"/>
        </authorList>
    </citation>
    <scope>NUCLEOTIDE SEQUENCE [LARGE SCALE MRNA]</scope>
    <source>
        <tissue>Ovary</tissue>
    </source>
</reference>
<reference key="4">
    <citation type="journal article" date="2004" name="Nat. Genet.">
        <title>Complete sequencing and characterization of 21,243 full-length human cDNAs.</title>
        <authorList>
            <person name="Ota T."/>
            <person name="Suzuki Y."/>
            <person name="Nishikawa T."/>
            <person name="Otsuki T."/>
            <person name="Sugiyama T."/>
            <person name="Irie R."/>
            <person name="Wakamatsu A."/>
            <person name="Hayashi K."/>
            <person name="Sato H."/>
            <person name="Nagai K."/>
            <person name="Kimura K."/>
            <person name="Makita H."/>
            <person name="Sekine M."/>
            <person name="Obayashi M."/>
            <person name="Nishi T."/>
            <person name="Shibahara T."/>
            <person name="Tanaka T."/>
            <person name="Ishii S."/>
            <person name="Yamamoto J."/>
            <person name="Saito K."/>
            <person name="Kawai Y."/>
            <person name="Isono Y."/>
            <person name="Nakamura Y."/>
            <person name="Nagahari K."/>
            <person name="Murakami K."/>
            <person name="Yasuda T."/>
            <person name="Iwayanagi T."/>
            <person name="Wagatsuma M."/>
            <person name="Shiratori A."/>
            <person name="Sudo H."/>
            <person name="Hosoiri T."/>
            <person name="Kaku Y."/>
            <person name="Kodaira H."/>
            <person name="Kondo H."/>
            <person name="Sugawara M."/>
            <person name="Takahashi M."/>
            <person name="Kanda K."/>
            <person name="Yokoi T."/>
            <person name="Furuya T."/>
            <person name="Kikkawa E."/>
            <person name="Omura Y."/>
            <person name="Abe K."/>
            <person name="Kamihara K."/>
            <person name="Katsuta N."/>
            <person name="Sato K."/>
            <person name="Tanikawa M."/>
            <person name="Yamazaki M."/>
            <person name="Ninomiya K."/>
            <person name="Ishibashi T."/>
            <person name="Yamashita H."/>
            <person name="Murakawa K."/>
            <person name="Fujimori K."/>
            <person name="Tanai H."/>
            <person name="Kimata M."/>
            <person name="Watanabe M."/>
            <person name="Hiraoka S."/>
            <person name="Chiba Y."/>
            <person name="Ishida S."/>
            <person name="Ono Y."/>
            <person name="Takiguchi S."/>
            <person name="Watanabe S."/>
            <person name="Yosida M."/>
            <person name="Hotuta T."/>
            <person name="Kusano J."/>
            <person name="Kanehori K."/>
            <person name="Takahashi-Fujii A."/>
            <person name="Hara H."/>
            <person name="Tanase T.-O."/>
            <person name="Nomura Y."/>
            <person name="Togiya S."/>
            <person name="Komai F."/>
            <person name="Hara R."/>
            <person name="Takeuchi K."/>
            <person name="Arita M."/>
            <person name="Imose N."/>
            <person name="Musashino K."/>
            <person name="Yuuki H."/>
            <person name="Oshima A."/>
            <person name="Sasaki N."/>
            <person name="Aotsuka S."/>
            <person name="Yoshikawa Y."/>
            <person name="Matsunawa H."/>
            <person name="Ichihara T."/>
            <person name="Shiohata N."/>
            <person name="Sano S."/>
            <person name="Moriya S."/>
            <person name="Momiyama H."/>
            <person name="Satoh N."/>
            <person name="Takami S."/>
            <person name="Terashima Y."/>
            <person name="Suzuki O."/>
            <person name="Nakagawa S."/>
            <person name="Senoh A."/>
            <person name="Mizoguchi H."/>
            <person name="Goto Y."/>
            <person name="Shimizu F."/>
            <person name="Wakebe H."/>
            <person name="Hishigaki H."/>
            <person name="Watanabe T."/>
            <person name="Sugiyama A."/>
            <person name="Takemoto M."/>
            <person name="Kawakami B."/>
            <person name="Yamazaki M."/>
            <person name="Watanabe K."/>
            <person name="Kumagai A."/>
            <person name="Itakura S."/>
            <person name="Fukuzumi Y."/>
            <person name="Fujimori Y."/>
            <person name="Komiyama M."/>
            <person name="Tashiro H."/>
            <person name="Tanigami A."/>
            <person name="Fujiwara T."/>
            <person name="Ono T."/>
            <person name="Yamada K."/>
            <person name="Fujii Y."/>
            <person name="Ozaki K."/>
            <person name="Hirao M."/>
            <person name="Ohmori Y."/>
            <person name="Kawabata A."/>
            <person name="Hikiji T."/>
            <person name="Kobatake N."/>
            <person name="Inagaki H."/>
            <person name="Ikema Y."/>
            <person name="Okamoto S."/>
            <person name="Okitani R."/>
            <person name="Kawakami T."/>
            <person name="Noguchi S."/>
            <person name="Itoh T."/>
            <person name="Shigeta K."/>
            <person name="Senba T."/>
            <person name="Matsumura K."/>
            <person name="Nakajima Y."/>
            <person name="Mizuno T."/>
            <person name="Morinaga M."/>
            <person name="Sasaki M."/>
            <person name="Togashi T."/>
            <person name="Oyama M."/>
            <person name="Hata H."/>
            <person name="Watanabe M."/>
            <person name="Komatsu T."/>
            <person name="Mizushima-Sugano J."/>
            <person name="Satoh T."/>
            <person name="Shirai Y."/>
            <person name="Takahashi Y."/>
            <person name="Nakagawa K."/>
            <person name="Okumura K."/>
            <person name="Nagase T."/>
            <person name="Nomura N."/>
            <person name="Kikuchi H."/>
            <person name="Masuho Y."/>
            <person name="Yamashita R."/>
            <person name="Nakai K."/>
            <person name="Yada T."/>
            <person name="Nakamura Y."/>
            <person name="Ohara O."/>
            <person name="Isogai T."/>
            <person name="Sugano S."/>
        </authorList>
    </citation>
    <scope>NUCLEOTIDE SEQUENCE [LARGE SCALE MRNA] OF 285-544</scope>
    <source>
        <tissue>Hippocampus</tissue>
    </source>
</reference>
<reference key="5">
    <citation type="journal article" date="2002" name="J. Biol. Chem.">
        <title>Identification of developmentally expressed proteins that functionally interact with Nedd4 ubiquitin ligase.</title>
        <authorList>
            <person name="Murillas R."/>
            <person name="Simms K.S."/>
            <person name="Hatakeyama S."/>
            <person name="Weissman A.M."/>
            <person name="Kuehn M.R."/>
        </authorList>
    </citation>
    <scope>SUBCELLULAR LOCATION</scope>
    <scope>INTERACTION WITH NEDD4</scope>
</reference>
<reference key="6">
    <citation type="journal article" date="2004" name="Curr. Biol.">
        <title>Proteomic, functional, and domain-based analysis of in vivo 14-3-3 binding proteins involved in cytoskeletal regulation and cellular organization.</title>
        <authorList>
            <person name="Jin J."/>
            <person name="Smith F.D."/>
            <person name="Stark C."/>
            <person name="Wells C.D."/>
            <person name="Fawcett J.P."/>
            <person name="Kulkarni S."/>
            <person name="Metalnikov P."/>
            <person name="O'Donnell P."/>
            <person name="Taylor P."/>
            <person name="Taylor L."/>
            <person name="Zougman A."/>
            <person name="Woodgett J.R."/>
            <person name="Langeberg L.K."/>
            <person name="Scott J.D."/>
            <person name="Pawson T."/>
        </authorList>
    </citation>
    <scope>INTERACTION WITH 14-3-3 PROTEINS</scope>
</reference>
<reference key="7">
    <citation type="journal article" date="2008" name="Proc. Natl. Acad. Sci. U.S.A.">
        <title>A quantitative atlas of mitotic phosphorylation.</title>
        <authorList>
            <person name="Dephoure N."/>
            <person name="Zhou C."/>
            <person name="Villen J."/>
            <person name="Beausoleil S.A."/>
            <person name="Bakalarski C.E."/>
            <person name="Elledge S.J."/>
            <person name="Gygi S.P."/>
        </authorList>
    </citation>
    <scope>PHOSPHORYLATION [LARGE SCALE ANALYSIS] AT SER-176</scope>
    <scope>IDENTIFICATION BY MASS SPECTROMETRY [LARGE SCALE ANALYSIS]</scope>
    <source>
        <tissue>Cervix carcinoma</tissue>
    </source>
</reference>
<reference key="8">
    <citation type="journal article" date="2013" name="J. Proteome Res.">
        <title>Toward a comprehensive characterization of a human cancer cell phosphoproteome.</title>
        <authorList>
            <person name="Zhou H."/>
            <person name="Di Palma S."/>
            <person name="Preisinger C."/>
            <person name="Peng M."/>
            <person name="Polat A.N."/>
            <person name="Heck A.J."/>
            <person name="Mohammed S."/>
        </authorList>
    </citation>
    <scope>PHOSPHORYLATION [LARGE SCALE ANALYSIS] AT SER-176</scope>
    <scope>IDENTIFICATION BY MASS SPECTROMETRY [LARGE SCALE ANALYSIS]</scope>
    <source>
        <tissue>Erythroleukemia</tissue>
    </source>
</reference>
<reference key="9">
    <citation type="journal article" date="2021" name="Front. Microbiol.">
        <title>N4BP3 Regulates RIG-I-Like Receptor Antiviral Signaling Positively by Targeting Mitochondrial Antiviral Signaling Protein.</title>
        <authorList>
            <person name="Wang C."/>
            <person name="Ling T."/>
            <person name="Zhong N."/>
            <person name="Xu L.G."/>
        </authorList>
    </citation>
    <scope>FUNCTION</scope>
    <scope>INTERACTION WITH MAVS</scope>
</reference>
<dbReference type="EMBL" id="AB002339">
    <property type="protein sequence ID" value="BAA20799.1"/>
    <property type="status" value="ALT_INIT"/>
    <property type="molecule type" value="mRNA"/>
</dbReference>
<dbReference type="EMBL" id="CH471165">
    <property type="protein sequence ID" value="EAW53851.1"/>
    <property type="molecule type" value="Genomic_DNA"/>
</dbReference>
<dbReference type="EMBL" id="CH471165">
    <property type="protein sequence ID" value="EAW53852.1"/>
    <property type="molecule type" value="Genomic_DNA"/>
</dbReference>
<dbReference type="EMBL" id="CH471165">
    <property type="protein sequence ID" value="EAW53853.1"/>
    <property type="molecule type" value="Genomic_DNA"/>
</dbReference>
<dbReference type="EMBL" id="CH471165">
    <property type="protein sequence ID" value="EAW53854.1"/>
    <property type="molecule type" value="Genomic_DNA"/>
</dbReference>
<dbReference type="EMBL" id="BC053323">
    <property type="protein sequence ID" value="AAH53323.2"/>
    <property type="molecule type" value="mRNA"/>
</dbReference>
<dbReference type="EMBL" id="AK127224">
    <property type="protein sequence ID" value="BAC86891.1"/>
    <property type="status" value="ALT_SEQ"/>
    <property type="molecule type" value="mRNA"/>
</dbReference>
<dbReference type="EMBL" id="AK295663">
    <property type="protein sequence ID" value="BAG58525.1"/>
    <property type="status" value="ALT_INIT"/>
    <property type="molecule type" value="mRNA"/>
</dbReference>
<dbReference type="CCDS" id="CCDS34307.1"/>
<dbReference type="RefSeq" id="NP_055926.1">
    <property type="nucleotide sequence ID" value="NM_015111.2"/>
</dbReference>
<dbReference type="RefSeq" id="XP_006714897.1">
    <property type="nucleotide sequence ID" value="XM_006714834.3"/>
</dbReference>
<dbReference type="RefSeq" id="XP_011532775.1">
    <property type="nucleotide sequence ID" value="XM_011534473.2"/>
</dbReference>
<dbReference type="RefSeq" id="XP_011532776.1">
    <property type="nucleotide sequence ID" value="XM_011534474.2"/>
</dbReference>
<dbReference type="RefSeq" id="XP_047272953.1">
    <property type="nucleotide sequence ID" value="XM_047416997.1"/>
</dbReference>
<dbReference type="RefSeq" id="XP_047272954.1">
    <property type="nucleotide sequence ID" value="XM_047416998.1"/>
</dbReference>
<dbReference type="SMR" id="O15049"/>
<dbReference type="BioGRID" id="116755">
    <property type="interactions" value="57"/>
</dbReference>
<dbReference type="FunCoup" id="O15049">
    <property type="interactions" value="312"/>
</dbReference>
<dbReference type="IntAct" id="O15049">
    <property type="interactions" value="43"/>
</dbReference>
<dbReference type="MINT" id="O15049"/>
<dbReference type="STRING" id="9606.ENSP00000274605"/>
<dbReference type="GlyGen" id="O15049">
    <property type="glycosylation" value="1 site"/>
</dbReference>
<dbReference type="iPTMnet" id="O15049"/>
<dbReference type="PhosphoSitePlus" id="O15049"/>
<dbReference type="BioMuta" id="N4BP3"/>
<dbReference type="jPOST" id="O15049"/>
<dbReference type="MassIVE" id="O15049"/>
<dbReference type="PaxDb" id="9606-ENSP00000274605"/>
<dbReference type="PeptideAtlas" id="O15049"/>
<dbReference type="ProteomicsDB" id="48401"/>
<dbReference type="Pumba" id="O15049"/>
<dbReference type="Antibodypedia" id="29410">
    <property type="antibodies" value="81 antibodies from 19 providers"/>
</dbReference>
<dbReference type="DNASU" id="23138"/>
<dbReference type="Ensembl" id="ENST00000274605.6">
    <property type="protein sequence ID" value="ENSP00000274605.4"/>
    <property type="gene ID" value="ENSG00000145911.6"/>
</dbReference>
<dbReference type="GeneID" id="23138"/>
<dbReference type="KEGG" id="hsa:23138"/>
<dbReference type="MANE-Select" id="ENST00000274605.6">
    <property type="protein sequence ID" value="ENSP00000274605.4"/>
    <property type="RefSeq nucleotide sequence ID" value="NM_015111.2"/>
    <property type="RefSeq protein sequence ID" value="NP_055926.1"/>
</dbReference>
<dbReference type="UCSC" id="uc003mik.2">
    <property type="organism name" value="human"/>
</dbReference>
<dbReference type="AGR" id="HGNC:29852"/>
<dbReference type="CTD" id="23138"/>
<dbReference type="DisGeNET" id="23138"/>
<dbReference type="GeneCards" id="N4BP3"/>
<dbReference type="HGNC" id="HGNC:29852">
    <property type="gene designation" value="N4BP3"/>
</dbReference>
<dbReference type="HPA" id="ENSG00000145911">
    <property type="expression patterns" value="Tissue enhanced (esophagus)"/>
</dbReference>
<dbReference type="MIM" id="619140">
    <property type="type" value="gene"/>
</dbReference>
<dbReference type="neXtProt" id="NX_O15049"/>
<dbReference type="OpenTargets" id="ENSG00000145911"/>
<dbReference type="VEuPathDB" id="HostDB:ENSG00000145911"/>
<dbReference type="eggNOG" id="ENOG502QVNK">
    <property type="taxonomic scope" value="Eukaryota"/>
</dbReference>
<dbReference type="GeneTree" id="ENSGT00940000158603"/>
<dbReference type="HOGENOM" id="CLU_026379_3_1_1"/>
<dbReference type="InParanoid" id="O15049"/>
<dbReference type="OMA" id="FSCKSMA"/>
<dbReference type="OrthoDB" id="10030037at2759"/>
<dbReference type="PAN-GO" id="O15049">
    <property type="GO annotations" value="1 GO annotation based on evolutionary models"/>
</dbReference>
<dbReference type="PhylomeDB" id="O15049"/>
<dbReference type="TreeFam" id="TF331420"/>
<dbReference type="PathwayCommons" id="O15049"/>
<dbReference type="SignaLink" id="O15049"/>
<dbReference type="BioGRID-ORCS" id="23138">
    <property type="hits" value="10 hits in 1152 CRISPR screens"/>
</dbReference>
<dbReference type="GenomeRNAi" id="23138"/>
<dbReference type="Pharos" id="O15049">
    <property type="development level" value="Tdark"/>
</dbReference>
<dbReference type="PRO" id="PR:O15049"/>
<dbReference type="Proteomes" id="UP000005640">
    <property type="component" value="Chromosome 5"/>
</dbReference>
<dbReference type="RNAct" id="O15049">
    <property type="molecule type" value="protein"/>
</dbReference>
<dbReference type="Bgee" id="ENSG00000145911">
    <property type="expression patterns" value="Expressed in lower esophagus mucosa and 118 other cell types or tissues"/>
</dbReference>
<dbReference type="GO" id="GO:0030424">
    <property type="term" value="C:axon"/>
    <property type="evidence" value="ECO:0007669"/>
    <property type="project" value="UniProtKB-SubCell"/>
</dbReference>
<dbReference type="GO" id="GO:0031410">
    <property type="term" value="C:cytoplasmic vesicle"/>
    <property type="evidence" value="ECO:0000318"/>
    <property type="project" value="GO_Central"/>
</dbReference>
<dbReference type="GO" id="GO:0030425">
    <property type="term" value="C:dendrite"/>
    <property type="evidence" value="ECO:0007669"/>
    <property type="project" value="UniProtKB-SubCell"/>
</dbReference>
<dbReference type="GO" id="GO:0045087">
    <property type="term" value="P:innate immune response"/>
    <property type="evidence" value="ECO:0000314"/>
    <property type="project" value="UniProt"/>
</dbReference>
<dbReference type="GO" id="GO:0007399">
    <property type="term" value="P:nervous system development"/>
    <property type="evidence" value="ECO:0007669"/>
    <property type="project" value="UniProtKB-KW"/>
</dbReference>
<dbReference type="InterPro" id="IPR033571">
    <property type="entry name" value="N4BP3"/>
</dbReference>
<dbReference type="PANTHER" id="PTHR32274">
    <property type="entry name" value="NEDD4-BINDING PROTEIN 3"/>
    <property type="match status" value="1"/>
</dbReference>
<dbReference type="PANTHER" id="PTHR32274:SF1">
    <property type="entry name" value="NEDD4-BINDING PROTEIN 3"/>
    <property type="match status" value="1"/>
</dbReference>
<dbReference type="Pfam" id="PF06818">
    <property type="entry name" value="Fez1"/>
    <property type="match status" value="2"/>
</dbReference>
<accession>O15049</accession>
<accession>B4DIL3</accession>
<accession>D3DWP3</accession>
<accession>Q6ZSQ6</accession>
<accession>Q7Z6I3</accession>
<name>N4BP3_HUMAN</name>
<feature type="chain" id="PRO_0000096682" description="NEDD4-binding protein 3">
    <location>
        <begin position="1"/>
        <end position="544"/>
    </location>
</feature>
<feature type="region of interest" description="Disordered" evidence="4">
    <location>
        <begin position="61"/>
        <end position="84"/>
    </location>
</feature>
<feature type="region of interest" description="Disordered" evidence="4">
    <location>
        <begin position="116"/>
        <end position="252"/>
    </location>
</feature>
<feature type="region of interest" description="Disordered" evidence="4">
    <location>
        <begin position="335"/>
        <end position="365"/>
    </location>
</feature>
<feature type="region of interest" description="Disordered" evidence="4">
    <location>
        <begin position="430"/>
        <end position="465"/>
    </location>
</feature>
<feature type="coiled-coil region" evidence="3">
    <location>
        <begin position="294"/>
        <end position="530"/>
    </location>
</feature>
<feature type="compositionally biased region" description="Low complexity" evidence="4">
    <location>
        <begin position="186"/>
        <end position="222"/>
    </location>
</feature>
<feature type="modified residue" description="Phosphoserine" evidence="9 10">
    <location>
        <position position="176"/>
    </location>
</feature>
<feature type="sequence conflict" description="In Ref. 1; BAA20799." evidence="8" ref="1">
    <original>L</original>
    <variation>P</variation>
    <location>
        <position position="29"/>
    </location>
</feature>
<feature type="sequence conflict" description="In Ref. 3; AAH53323." evidence="8" ref="3">
    <original>R</original>
    <variation>Q</variation>
    <location>
        <position position="163"/>
    </location>
</feature>
<feature type="sequence conflict" description="In Ref. 4; BAC86891." evidence="8" ref="4">
    <original>R</original>
    <variation>H</variation>
    <location>
        <position position="317"/>
    </location>
</feature>
<gene>
    <name type="primary">N4BP3</name>
    <name type="synonym">KIAA0341</name>
</gene>
<keyword id="KW-0966">Cell projection</keyword>
<keyword id="KW-0175">Coiled coil</keyword>
<keyword id="KW-0968">Cytoplasmic vesicle</keyword>
<keyword id="KW-0217">Developmental protein</keyword>
<keyword id="KW-0391">Immunity</keyword>
<keyword id="KW-0399">Innate immunity</keyword>
<keyword id="KW-0524">Neurogenesis</keyword>
<keyword id="KW-0597">Phosphoprotein</keyword>
<keyword id="KW-1267">Proteomics identification</keyword>
<keyword id="KW-1185">Reference proteome</keyword>